<feature type="chain" id="PRO_1000020583" description="tRNA dimethylallyltransferase">
    <location>
        <begin position="1"/>
        <end position="311"/>
    </location>
</feature>
<feature type="region of interest" description="Interaction with substrate tRNA" evidence="1">
    <location>
        <begin position="41"/>
        <end position="44"/>
    </location>
</feature>
<feature type="region of interest" description="Interaction with substrate tRNA" evidence="1">
    <location>
        <begin position="165"/>
        <end position="169"/>
    </location>
</feature>
<feature type="binding site" evidence="1">
    <location>
        <begin position="16"/>
        <end position="23"/>
    </location>
    <ligand>
        <name>ATP</name>
        <dbReference type="ChEBI" id="CHEBI:30616"/>
    </ligand>
</feature>
<feature type="binding site" evidence="1">
    <location>
        <begin position="18"/>
        <end position="23"/>
    </location>
    <ligand>
        <name>substrate</name>
    </ligand>
</feature>
<feature type="site" description="Interaction with substrate tRNA" evidence="1">
    <location>
        <position position="107"/>
    </location>
</feature>
<feature type="site" description="Interaction with substrate tRNA" evidence="1">
    <location>
        <position position="129"/>
    </location>
</feature>
<comment type="function">
    <text evidence="1">Catalyzes the transfer of a dimethylallyl group onto the adenine at position 37 in tRNAs that read codons beginning with uridine, leading to the formation of N6-(dimethylallyl)adenosine (i(6)A).</text>
</comment>
<comment type="catalytic activity">
    <reaction evidence="1">
        <text>adenosine(37) in tRNA + dimethylallyl diphosphate = N(6)-dimethylallyladenosine(37) in tRNA + diphosphate</text>
        <dbReference type="Rhea" id="RHEA:26482"/>
        <dbReference type="Rhea" id="RHEA-COMP:10162"/>
        <dbReference type="Rhea" id="RHEA-COMP:10375"/>
        <dbReference type="ChEBI" id="CHEBI:33019"/>
        <dbReference type="ChEBI" id="CHEBI:57623"/>
        <dbReference type="ChEBI" id="CHEBI:74411"/>
        <dbReference type="ChEBI" id="CHEBI:74415"/>
        <dbReference type="EC" id="2.5.1.75"/>
    </reaction>
</comment>
<comment type="cofactor">
    <cofactor evidence="1">
        <name>Mg(2+)</name>
        <dbReference type="ChEBI" id="CHEBI:18420"/>
    </cofactor>
</comment>
<comment type="subunit">
    <text evidence="1">Monomer.</text>
</comment>
<comment type="similarity">
    <text evidence="1">Belongs to the IPP transferase family.</text>
</comment>
<reference key="1">
    <citation type="submission" date="2005-08" db="EMBL/GenBank/DDBJ databases">
        <title>Complete sequence of Chlorobium chlorochromatii CaD3.</title>
        <authorList>
            <consortium name="US DOE Joint Genome Institute"/>
            <person name="Copeland A."/>
            <person name="Lucas S."/>
            <person name="Lapidus A."/>
            <person name="Barry K."/>
            <person name="Detter J.C."/>
            <person name="Glavina T."/>
            <person name="Hammon N."/>
            <person name="Israni S."/>
            <person name="Pitluck S."/>
            <person name="Bryant D."/>
            <person name="Schmutz J."/>
            <person name="Larimer F."/>
            <person name="Land M."/>
            <person name="Kyrpides N."/>
            <person name="Ivanova N."/>
            <person name="Richardson P."/>
        </authorList>
    </citation>
    <scope>NUCLEOTIDE SEQUENCE [LARGE SCALE GENOMIC DNA]</scope>
    <source>
        <strain>CaD3</strain>
    </source>
</reference>
<protein>
    <recommendedName>
        <fullName evidence="1">tRNA dimethylallyltransferase</fullName>
        <ecNumber evidence="1">2.5.1.75</ecNumber>
    </recommendedName>
    <alternativeName>
        <fullName evidence="1">Dimethylallyl diphosphate:tRNA dimethylallyltransferase</fullName>
        <shortName evidence="1">DMAPP:tRNA dimethylallyltransferase</shortName>
        <shortName evidence="1">DMATase</shortName>
    </alternativeName>
    <alternativeName>
        <fullName evidence="1">Isopentenyl-diphosphate:tRNA isopentenyltransferase</fullName>
        <shortName evidence="1">IPP transferase</shortName>
        <shortName evidence="1">IPPT</shortName>
        <shortName evidence="1">IPTase</shortName>
    </alternativeName>
</protein>
<keyword id="KW-0067">ATP-binding</keyword>
<keyword id="KW-0460">Magnesium</keyword>
<keyword id="KW-0547">Nucleotide-binding</keyword>
<keyword id="KW-0808">Transferase</keyword>
<keyword id="KW-0819">tRNA processing</keyword>
<proteinExistence type="inferred from homology"/>
<organism>
    <name type="scientific">Chlorobium chlorochromatii (strain CaD3)</name>
    <dbReference type="NCBI Taxonomy" id="340177"/>
    <lineage>
        <taxon>Bacteria</taxon>
        <taxon>Pseudomonadati</taxon>
        <taxon>Chlorobiota</taxon>
        <taxon>Chlorobiia</taxon>
        <taxon>Chlorobiales</taxon>
        <taxon>Chlorobiaceae</taxon>
        <taxon>Chlorobium/Pelodictyon group</taxon>
        <taxon>Chlorobium</taxon>
    </lineage>
</organism>
<name>MIAA_CHLCH</name>
<sequence>MATSAMHHPPIVVLAGATASGKSALAMAIAKKIGAEIISADSRQIYWELTIGAAKPSPKELQEVPHHFINEKHIGEPFTAGDFAVEAWQRITAIHQRDKRVVVAGGSTLYVEGLLKGFANLPSANEAIRQRLETELQTLGSEALYQRLVKLDPTQAATLDATKTQRLIRSLEIIESSGTSVTALKAAQQPPPSHFTFLPFALFLPRETLYQRINQRVDDMMANGLLHEAEALYQTYCDTWQERNLSALRTVGYQELFAYFEGRHSLDEAINLIKQHTRNYAKRQITFFSNHLALRWIEQAEMEEIVEQHGF</sequence>
<evidence type="ECO:0000255" key="1">
    <source>
        <dbReference type="HAMAP-Rule" id="MF_00185"/>
    </source>
</evidence>
<gene>
    <name evidence="1" type="primary">miaA</name>
    <name type="ordered locus">Cag_1394</name>
</gene>
<dbReference type="EC" id="2.5.1.75" evidence="1"/>
<dbReference type="EMBL" id="CP000108">
    <property type="protein sequence ID" value="ABB28652.1"/>
    <property type="molecule type" value="Genomic_DNA"/>
</dbReference>
<dbReference type="SMR" id="Q3AQS3"/>
<dbReference type="STRING" id="340177.Cag_1394"/>
<dbReference type="KEGG" id="cch:Cag_1394"/>
<dbReference type="eggNOG" id="COG0324">
    <property type="taxonomic scope" value="Bacteria"/>
</dbReference>
<dbReference type="HOGENOM" id="CLU_032616_0_1_10"/>
<dbReference type="OrthoDB" id="9776390at2"/>
<dbReference type="GO" id="GO:0005524">
    <property type="term" value="F:ATP binding"/>
    <property type="evidence" value="ECO:0007669"/>
    <property type="project" value="UniProtKB-UniRule"/>
</dbReference>
<dbReference type="GO" id="GO:0052381">
    <property type="term" value="F:tRNA dimethylallyltransferase activity"/>
    <property type="evidence" value="ECO:0007669"/>
    <property type="project" value="UniProtKB-UniRule"/>
</dbReference>
<dbReference type="GO" id="GO:0006400">
    <property type="term" value="P:tRNA modification"/>
    <property type="evidence" value="ECO:0007669"/>
    <property type="project" value="TreeGrafter"/>
</dbReference>
<dbReference type="Gene3D" id="1.10.20.140">
    <property type="match status" value="1"/>
</dbReference>
<dbReference type="Gene3D" id="3.40.50.300">
    <property type="entry name" value="P-loop containing nucleotide triphosphate hydrolases"/>
    <property type="match status" value="1"/>
</dbReference>
<dbReference type="HAMAP" id="MF_00185">
    <property type="entry name" value="IPP_trans"/>
    <property type="match status" value="1"/>
</dbReference>
<dbReference type="InterPro" id="IPR039657">
    <property type="entry name" value="Dimethylallyltransferase"/>
</dbReference>
<dbReference type="InterPro" id="IPR018022">
    <property type="entry name" value="IPT"/>
</dbReference>
<dbReference type="InterPro" id="IPR027417">
    <property type="entry name" value="P-loop_NTPase"/>
</dbReference>
<dbReference type="NCBIfam" id="TIGR00174">
    <property type="entry name" value="miaA"/>
    <property type="match status" value="1"/>
</dbReference>
<dbReference type="PANTHER" id="PTHR11088">
    <property type="entry name" value="TRNA DIMETHYLALLYLTRANSFERASE"/>
    <property type="match status" value="1"/>
</dbReference>
<dbReference type="PANTHER" id="PTHR11088:SF60">
    <property type="entry name" value="TRNA DIMETHYLALLYLTRANSFERASE"/>
    <property type="match status" value="1"/>
</dbReference>
<dbReference type="Pfam" id="PF01715">
    <property type="entry name" value="IPPT"/>
    <property type="match status" value="1"/>
</dbReference>
<dbReference type="SUPFAM" id="SSF52540">
    <property type="entry name" value="P-loop containing nucleoside triphosphate hydrolases"/>
    <property type="match status" value="2"/>
</dbReference>
<accession>Q3AQS3</accession>